<protein>
    <recommendedName>
        <fullName>Superoxide dismutase [Fe]</fullName>
        <ecNumber>1.15.1.1</ecNumber>
    </recommendedName>
    <alternativeName>
        <fullName>FeSOD</fullName>
    </alternativeName>
</protein>
<keyword id="KW-0408">Iron</keyword>
<keyword id="KW-0479">Metal-binding</keyword>
<keyword id="KW-0560">Oxidoreductase</keyword>
<proteinExistence type="evidence at transcript level"/>
<sequence>MAFKLPALPYGMRELIPHISEETLSFHYGKHHAGYVNKLNSLIKGTPLESCTIEELILGQTGAVFNNAAQIWNHTFYWNSMGPNCGGEPTGPIRKKIEEKFGSFSAFKTDFSNLLAGHFGSGWGWLVLKDDGTADIVQTHDAGSPLKENLGRPLLCCDVWEHAYYIDYKNDRLSYINSWWNLVNWDFANKNLEAPFKWS</sequence>
<comment type="function">
    <text>Destroys superoxide anion radicals which are normally produced within the cells and which are toxic to biological systems.</text>
</comment>
<comment type="catalytic activity">
    <reaction>
        <text>2 superoxide + 2 H(+) = H2O2 + O2</text>
        <dbReference type="Rhea" id="RHEA:20696"/>
        <dbReference type="ChEBI" id="CHEBI:15378"/>
        <dbReference type="ChEBI" id="CHEBI:15379"/>
        <dbReference type="ChEBI" id="CHEBI:16240"/>
        <dbReference type="ChEBI" id="CHEBI:18421"/>
        <dbReference type="EC" id="1.15.1.1"/>
    </reaction>
</comment>
<comment type="cofactor">
    <cofactor evidence="1">
        <name>Fe cation</name>
        <dbReference type="ChEBI" id="CHEBI:24875"/>
    </cofactor>
    <text evidence="1">Binds 1 Fe cation per subunit.</text>
</comment>
<comment type="subunit">
    <text evidence="2">Homodimer.</text>
</comment>
<comment type="similarity">
    <text evidence="2">Belongs to the iron/manganese superoxide dismutase family.</text>
</comment>
<feature type="chain" id="PRO_0000159964" description="Superoxide dismutase [Fe]">
    <location>
        <begin position="1"/>
        <end position="199"/>
    </location>
</feature>
<feature type="binding site" evidence="1">
    <location>
        <position position="27"/>
    </location>
    <ligand>
        <name>Fe cation</name>
        <dbReference type="ChEBI" id="CHEBI:24875"/>
    </ligand>
</feature>
<feature type="binding site" evidence="1">
    <location>
        <position position="74"/>
    </location>
    <ligand>
        <name>Fe cation</name>
        <dbReference type="ChEBI" id="CHEBI:24875"/>
    </ligand>
</feature>
<feature type="binding site" evidence="1">
    <location>
        <position position="158"/>
    </location>
    <ligand>
        <name>Fe cation</name>
        <dbReference type="ChEBI" id="CHEBI:24875"/>
    </ligand>
</feature>
<feature type="binding site" evidence="1">
    <location>
        <position position="162"/>
    </location>
    <ligand>
        <name>Fe cation</name>
        <dbReference type="ChEBI" id="CHEBI:24875"/>
    </ligand>
</feature>
<name>SODF_BABBO</name>
<gene>
    <name type="primary">SODB</name>
</gene>
<accession>O15905</accession>
<dbReference type="EC" id="1.15.1.1"/>
<dbReference type="EMBL" id="U70131">
    <property type="protein sequence ID" value="AAB69756.1"/>
    <property type="molecule type" value="mRNA"/>
</dbReference>
<dbReference type="SMR" id="O15905"/>
<dbReference type="VEuPathDB" id="PiroplasmaDB:BBOV_IV011480"/>
<dbReference type="eggNOG" id="KOG0876">
    <property type="taxonomic scope" value="Eukaryota"/>
</dbReference>
<dbReference type="GO" id="GO:0046872">
    <property type="term" value="F:metal ion binding"/>
    <property type="evidence" value="ECO:0007669"/>
    <property type="project" value="UniProtKB-KW"/>
</dbReference>
<dbReference type="GO" id="GO:0004784">
    <property type="term" value="F:superoxide dismutase activity"/>
    <property type="evidence" value="ECO:0007669"/>
    <property type="project" value="UniProtKB-EC"/>
</dbReference>
<dbReference type="FunFam" id="1.10.287.990:FF:000002">
    <property type="entry name" value="Superoxide dismutase"/>
    <property type="match status" value="1"/>
</dbReference>
<dbReference type="FunFam" id="3.55.40.20:FF:000001">
    <property type="entry name" value="Superoxide dismutase"/>
    <property type="match status" value="1"/>
</dbReference>
<dbReference type="Gene3D" id="1.10.287.990">
    <property type="entry name" value="Fe,Mn superoxide dismutase (SOD) domain"/>
    <property type="match status" value="1"/>
</dbReference>
<dbReference type="Gene3D" id="3.55.40.20">
    <property type="entry name" value="Iron/manganese superoxide dismutase, C-terminal domain"/>
    <property type="match status" value="1"/>
</dbReference>
<dbReference type="InterPro" id="IPR001189">
    <property type="entry name" value="Mn/Fe_SOD"/>
</dbReference>
<dbReference type="InterPro" id="IPR019833">
    <property type="entry name" value="Mn/Fe_SOD_BS"/>
</dbReference>
<dbReference type="InterPro" id="IPR019832">
    <property type="entry name" value="Mn/Fe_SOD_C"/>
</dbReference>
<dbReference type="InterPro" id="IPR019831">
    <property type="entry name" value="Mn/Fe_SOD_N"/>
</dbReference>
<dbReference type="InterPro" id="IPR036324">
    <property type="entry name" value="Mn/Fe_SOD_N_sf"/>
</dbReference>
<dbReference type="InterPro" id="IPR036314">
    <property type="entry name" value="SOD_C_sf"/>
</dbReference>
<dbReference type="PANTHER" id="PTHR42769">
    <property type="entry name" value="SUPEROXIDE DISMUTASE"/>
    <property type="match status" value="1"/>
</dbReference>
<dbReference type="PANTHER" id="PTHR42769:SF3">
    <property type="entry name" value="SUPEROXIDE DISMUTASE [FE] 2, CHLOROPLASTIC"/>
    <property type="match status" value="1"/>
</dbReference>
<dbReference type="Pfam" id="PF02777">
    <property type="entry name" value="Sod_Fe_C"/>
    <property type="match status" value="1"/>
</dbReference>
<dbReference type="Pfam" id="PF00081">
    <property type="entry name" value="Sod_Fe_N"/>
    <property type="match status" value="1"/>
</dbReference>
<dbReference type="PIRSF" id="PIRSF000349">
    <property type="entry name" value="SODismutase"/>
    <property type="match status" value="1"/>
</dbReference>
<dbReference type="PRINTS" id="PR01703">
    <property type="entry name" value="MNSODISMTASE"/>
</dbReference>
<dbReference type="SUPFAM" id="SSF54719">
    <property type="entry name" value="Fe,Mn superoxide dismutase (SOD), C-terminal domain"/>
    <property type="match status" value="1"/>
</dbReference>
<dbReference type="SUPFAM" id="SSF46609">
    <property type="entry name" value="Fe,Mn superoxide dismutase (SOD), N-terminal domain"/>
    <property type="match status" value="1"/>
</dbReference>
<dbReference type="PROSITE" id="PS00088">
    <property type="entry name" value="SOD_MN"/>
    <property type="match status" value="1"/>
</dbReference>
<organism>
    <name type="scientific">Babesia bovis</name>
    <dbReference type="NCBI Taxonomy" id="5865"/>
    <lineage>
        <taxon>Eukaryota</taxon>
        <taxon>Sar</taxon>
        <taxon>Alveolata</taxon>
        <taxon>Apicomplexa</taxon>
        <taxon>Aconoidasida</taxon>
        <taxon>Piroplasmida</taxon>
        <taxon>Babesiidae</taxon>
        <taxon>Babesia</taxon>
    </lineage>
</organism>
<reference key="1">
    <citation type="submission" date="1996-09" db="EMBL/GenBank/DDBJ databases">
        <title>Characterization of an iron-dependent superoxide dismutase gene from Babesia bovis.</title>
        <authorList>
            <person name="Silins G.U."/>
            <person name="Smith W.J."/>
            <person name="Cosier A."/>
            <person name="Blakeley R.L."/>
            <person name="Riddles P.W."/>
        </authorList>
    </citation>
    <scope>NUCLEOTIDE SEQUENCE [MRNA]</scope>
    <source>
        <strain>Samford</strain>
    </source>
</reference>
<evidence type="ECO:0000250" key="1"/>
<evidence type="ECO:0000305" key="2"/>